<feature type="signal peptide" evidence="4 5">
    <location>
        <begin position="1"/>
        <end position="19"/>
    </location>
</feature>
<feature type="chain" id="PRO_0000401120" description="Sodium channel neurotoxin MeuNaTxalpha-2" evidence="5">
    <location>
        <begin position="20"/>
        <end position="83"/>
    </location>
</feature>
<feature type="domain" description="LCN-type CS-alpha/beta" evidence="3">
    <location>
        <begin position="21"/>
        <end position="83"/>
    </location>
</feature>
<feature type="modified residue" description="Arginine amide" evidence="4 5">
    <location>
        <position position="83"/>
    </location>
</feature>
<feature type="disulfide bond" evidence="1">
    <location>
        <begin position="31"/>
        <end position="82"/>
    </location>
</feature>
<feature type="disulfide bond" evidence="1">
    <location>
        <begin position="35"/>
        <end position="55"/>
    </location>
</feature>
<feature type="disulfide bond" evidence="1">
    <location>
        <begin position="41"/>
        <end position="65"/>
    </location>
</feature>
<feature type="disulfide bond" evidence="1">
    <location>
        <begin position="45"/>
        <end position="67"/>
    </location>
</feature>
<protein>
    <recommendedName>
        <fullName evidence="6">Sodium channel neurotoxin MeuNaTxalpha-2</fullName>
    </recommendedName>
</protein>
<sequence>MNYLVMISLALLLMTGVESARDAYIANDRNCVYTCALNPYCDSECKKNGADSGYCQWFGRFGNACWCKNLPDKVPIRIPGECRGR</sequence>
<keyword id="KW-0027">Amidation</keyword>
<keyword id="KW-0044">Antibiotic</keyword>
<keyword id="KW-0929">Antimicrobial</keyword>
<keyword id="KW-0903">Direct protein sequencing</keyword>
<keyword id="KW-1015">Disulfide bond</keyword>
<keyword id="KW-0872">Ion channel impairing toxin</keyword>
<keyword id="KW-0528">Neurotoxin</keyword>
<keyword id="KW-0964">Secreted</keyword>
<keyword id="KW-0732">Signal</keyword>
<keyword id="KW-0800">Toxin</keyword>
<keyword id="KW-0738">Voltage-gated sodium channel impairing toxin</keyword>
<evidence type="ECO:0000250" key="1">
    <source>
        <dbReference type="UniProtKB" id="P86405"/>
    </source>
</evidence>
<evidence type="ECO:0000255" key="2"/>
<evidence type="ECO:0000255" key="3">
    <source>
        <dbReference type="PROSITE-ProRule" id="PRU01210"/>
    </source>
</evidence>
<evidence type="ECO:0000269" key="4">
    <source>
    </source>
</evidence>
<evidence type="ECO:0000269" key="5">
    <source ref="2"/>
</evidence>
<evidence type="ECO:0000303" key="6">
    <source>
    </source>
</evidence>
<evidence type="ECO:0000305" key="7"/>
<evidence type="ECO:0000305" key="8">
    <source>
    </source>
</evidence>
<comment type="function">
    <text evidence="4 5">Alpha toxins bind voltage-independently at site-3 of sodium channels (Nav) and inhibit the inactivation of the activated channels, thereby blocking neuronal transmission. This toxin inhibits inactivation of Nav1.4/SCN4A (EC(50)=2.23 uM) and drosophila DmNav1 (EC(50)=220 nM) (PubMed:21969612, Ref.2). The toxin (1 uM) does not significantly shift the midpoint of activation at the two channels, but induces a significant depolarizing shift in the V(1/2) of inactivation of the channels (PubMed:21969612). In addition, the toxin accelerates the recovery from fast inactivation in Nav1.4/SCN4A and DmNav1 (PubMed:21969612). It also shows antimicrobial activity (Ref.2).</text>
</comment>
<comment type="subcellular location">
    <subcellularLocation>
        <location evidence="4">Secreted</location>
    </subcellularLocation>
</comment>
<comment type="tissue specificity">
    <text evidence="8">Expressed by the venom gland.</text>
</comment>
<comment type="domain">
    <text evidence="7">Has the structural arrangement of an alpha-helix connected to antiparallel beta-sheets by disulfide bonds (CS-alpha/beta).</text>
</comment>
<comment type="mass spectrometry"/>
<comment type="miscellaneous">
    <text evidence="4">Negative results: shows no effect on Nav1.2/SCN2A, Nav1.3/SCN3A, Nav1.5/SCN5A, Nav1.6/SCN8A, Nav1.7/SCN9A and Nav1.8/SCN10A (PubMed:21969612).</text>
</comment>
<comment type="similarity">
    <text evidence="2">Belongs to the long (4 C-C) scorpion toxin superfamily. Sodium channel inhibitor family. Alpha subfamily.</text>
</comment>
<accession>P86403</accession>
<accession>D8UWD7</accession>
<accession>F1JYX0</accession>
<name>SCXN2_MESEU</name>
<organism>
    <name type="scientific">Mesobuthus eupeus</name>
    <name type="common">Lesser Asian scorpion</name>
    <name type="synonym">Buthus eupeus</name>
    <dbReference type="NCBI Taxonomy" id="34648"/>
    <lineage>
        <taxon>Eukaryota</taxon>
        <taxon>Metazoa</taxon>
        <taxon>Ecdysozoa</taxon>
        <taxon>Arthropoda</taxon>
        <taxon>Chelicerata</taxon>
        <taxon>Arachnida</taxon>
        <taxon>Scorpiones</taxon>
        <taxon>Buthida</taxon>
        <taxon>Buthoidea</taxon>
        <taxon>Buthidae</taxon>
        <taxon>Mesobuthus</taxon>
    </lineage>
</organism>
<reference key="1">
    <citation type="journal article" date="2012" name="Mol. Cell. Proteomics">
        <title>Evolutionary diversification of Mesobuthus alpha-scorpion toxins affecting sodium channels.</title>
        <authorList>
            <person name="Zhu S."/>
            <person name="Peigneur S."/>
            <person name="Gao B."/>
            <person name="Lu X."/>
            <person name="Cao C."/>
            <person name="Tytgat J."/>
        </authorList>
    </citation>
    <scope>NUCLEOTIDE SEQUENCE [GENOMIC DNA / MRNA]</scope>
    <scope>PROTEIN SEQUENCE OF 20-29</scope>
    <scope>FUNCTION</scope>
    <scope>SUBCELLULAR LOCATION</scope>
    <scope>MASS SPECTROMETRY</scope>
    <scope>AMIDATION AT ARG-83</scope>
    <source>
        <tissue>Venom</tissue>
        <tissue>Venom gland</tissue>
    </source>
</reference>
<reference key="2">
    <citation type="submission" date="2009-11" db="UniProtKB">
        <title>Characterization of a sodium channel toxin from the scorpion Mesobuthus eupeus venom.</title>
        <authorList>
            <person name="Zhu S.Y."/>
            <person name="Gao B."/>
        </authorList>
    </citation>
    <scope>PROTEIN SEQUENCE OF 20-83</scope>
    <scope>FUNCTION</scope>
    <scope>SUBCELLULAR LOCATION</scope>
    <scope>MASS SPECTROMETRY</scope>
    <scope>AMIDATION AT ARG-83</scope>
    <source>
        <tissue>Venom</tissue>
    </source>
</reference>
<proteinExistence type="evidence at protein level"/>
<dbReference type="EMBL" id="HQ332135">
    <property type="protein sequence ID" value="ADW41700.1"/>
    <property type="molecule type" value="Genomic_DNA"/>
</dbReference>
<dbReference type="EMBL" id="JF304616">
    <property type="protein sequence ID" value="ADY16679.1"/>
    <property type="molecule type" value="mRNA"/>
</dbReference>
<dbReference type="EMBL" id="GQ249202">
    <property type="protein sequence ID" value="ADF49574.1"/>
    <property type="molecule type" value="mRNA"/>
</dbReference>
<dbReference type="SMR" id="P86403"/>
<dbReference type="GO" id="GO:0005576">
    <property type="term" value="C:extracellular region"/>
    <property type="evidence" value="ECO:0007669"/>
    <property type="project" value="UniProtKB-SubCell"/>
</dbReference>
<dbReference type="GO" id="GO:0019871">
    <property type="term" value="F:sodium channel inhibitor activity"/>
    <property type="evidence" value="ECO:0007669"/>
    <property type="project" value="InterPro"/>
</dbReference>
<dbReference type="GO" id="GO:0090729">
    <property type="term" value="F:toxin activity"/>
    <property type="evidence" value="ECO:0007669"/>
    <property type="project" value="UniProtKB-KW"/>
</dbReference>
<dbReference type="GO" id="GO:0042742">
    <property type="term" value="P:defense response to bacterium"/>
    <property type="evidence" value="ECO:0007669"/>
    <property type="project" value="UniProtKB-KW"/>
</dbReference>
<dbReference type="CDD" id="cd23106">
    <property type="entry name" value="neurotoxins_LC_scorpion"/>
    <property type="match status" value="1"/>
</dbReference>
<dbReference type="FunFam" id="3.30.30.10:FF:000002">
    <property type="entry name" value="Alpha-like toxin BmK-M1"/>
    <property type="match status" value="1"/>
</dbReference>
<dbReference type="Gene3D" id="3.30.30.10">
    <property type="entry name" value="Knottin, scorpion toxin-like"/>
    <property type="match status" value="1"/>
</dbReference>
<dbReference type="InterPro" id="IPR044062">
    <property type="entry name" value="LCN-type_CS_alpha_beta_dom"/>
</dbReference>
<dbReference type="InterPro" id="IPR003614">
    <property type="entry name" value="Scorpion_toxin-like"/>
</dbReference>
<dbReference type="InterPro" id="IPR036574">
    <property type="entry name" value="Scorpion_toxin-like_sf"/>
</dbReference>
<dbReference type="InterPro" id="IPR018218">
    <property type="entry name" value="Scorpion_toxinL"/>
</dbReference>
<dbReference type="InterPro" id="IPR002061">
    <property type="entry name" value="Scorpion_toxinL/defensin"/>
</dbReference>
<dbReference type="Pfam" id="PF00537">
    <property type="entry name" value="Toxin_3"/>
    <property type="match status" value="1"/>
</dbReference>
<dbReference type="PRINTS" id="PR00285">
    <property type="entry name" value="SCORPNTOXIN"/>
</dbReference>
<dbReference type="SMART" id="SM00505">
    <property type="entry name" value="Knot1"/>
    <property type="match status" value="1"/>
</dbReference>
<dbReference type="SUPFAM" id="SSF57095">
    <property type="entry name" value="Scorpion toxin-like"/>
    <property type="match status" value="1"/>
</dbReference>
<dbReference type="PROSITE" id="PS51863">
    <property type="entry name" value="LCN_CSAB"/>
    <property type="match status" value="1"/>
</dbReference>